<gene>
    <name evidence="7" type="primary">asL7</name>
</gene>
<comment type="function">
    <text evidence="5">ABC transporter; part of the gene cluster that mediates the biosynthesis of xenovulene A, an unusual meroterpenoid that has potent inhibitory effects on the human gamma-aminobutyrate A (GABAA) benzodiazepine receptor.</text>
</comment>
<comment type="subcellular location">
    <subcellularLocation>
        <location evidence="8">Cell membrane</location>
        <topology evidence="1">Multi-pass membrane protein</topology>
    </subcellularLocation>
</comment>
<comment type="induction">
    <text evidence="5">Expression is significantly up-regulated under xenovulene A producing condition.</text>
</comment>
<comment type="biotechnology">
    <text evidence="6">Xenovulene A is a natural product exhibiting little structural resemblance with classical benzodiazepines yet is able to displace high-affinity ligand binding to the benzodiazepine site of the gamma-aminobutyrate A (GABAA) receptor and could be potentially used as an anti-depressant with reduced addictive properties.</text>
</comment>
<comment type="similarity">
    <text evidence="8">Belongs to the ABC transporter superfamily. ABCG family. PDR (TC 3.A.1.205) subfamily.</text>
</comment>
<feature type="chain" id="PRO_0000449186" description="ABC transporter asL7">
    <location>
        <begin position="1"/>
        <end position="1432"/>
    </location>
</feature>
<feature type="transmembrane region" description="Helical" evidence="1">
    <location>
        <begin position="450"/>
        <end position="470"/>
    </location>
</feature>
<feature type="transmembrane region" description="Helical" evidence="1">
    <location>
        <begin position="484"/>
        <end position="504"/>
    </location>
</feature>
<feature type="transmembrane region" description="Helical" evidence="1">
    <location>
        <begin position="530"/>
        <end position="550"/>
    </location>
</feature>
<feature type="transmembrane region" description="Helical" evidence="1">
    <location>
        <begin position="559"/>
        <end position="579"/>
    </location>
</feature>
<feature type="transmembrane region" description="Helical" evidence="1">
    <location>
        <begin position="597"/>
        <end position="617"/>
    </location>
</feature>
<feature type="transmembrane region" description="Helical" evidence="1">
    <location>
        <begin position="702"/>
        <end position="722"/>
    </location>
</feature>
<feature type="transmembrane region" description="Helical" evidence="1">
    <location>
        <begin position="1135"/>
        <end position="1155"/>
    </location>
</feature>
<feature type="transmembrane region" description="Helical" evidence="1">
    <location>
        <begin position="1166"/>
        <end position="1186"/>
    </location>
</feature>
<feature type="transmembrane region" description="Helical" evidence="1">
    <location>
        <begin position="1215"/>
        <end position="1235"/>
    </location>
</feature>
<feature type="transmembrane region" description="Helical" evidence="1">
    <location>
        <begin position="1251"/>
        <end position="1271"/>
    </location>
</feature>
<feature type="transmembrane region" description="Helical" evidence="1">
    <location>
        <begin position="1279"/>
        <end position="1299"/>
    </location>
</feature>
<feature type="transmembrane region" description="Helical" evidence="1">
    <location>
        <begin position="1317"/>
        <end position="1337"/>
    </location>
</feature>
<feature type="transmembrane region" description="Helical" evidence="1">
    <location>
        <begin position="1402"/>
        <end position="1422"/>
    </location>
</feature>
<feature type="domain" description="ABC transporter 1" evidence="2">
    <location>
        <begin position="91"/>
        <end position="341"/>
    </location>
</feature>
<feature type="domain" description="ABC transporter 2" evidence="2">
    <location>
        <begin position="786"/>
        <end position="1029"/>
    </location>
</feature>
<feature type="region of interest" description="Disordered" evidence="4">
    <location>
        <begin position="1"/>
        <end position="36"/>
    </location>
</feature>
<feature type="region of interest" description="Disordered" evidence="4">
    <location>
        <begin position="1076"/>
        <end position="1095"/>
    </location>
</feature>
<feature type="compositionally biased region" description="Polar residues" evidence="4">
    <location>
        <begin position="1"/>
        <end position="20"/>
    </location>
</feature>
<feature type="binding site" evidence="2">
    <location>
        <begin position="822"/>
        <end position="829"/>
    </location>
    <ligand>
        <name>ATP</name>
        <dbReference type="ChEBI" id="CHEBI:30616"/>
    </ligand>
</feature>
<feature type="glycosylation site" description="N-linked (GlcNAc...) asparagine" evidence="3">
    <location>
        <position position="265"/>
    </location>
</feature>
<feature type="glycosylation site" description="N-linked (GlcNAc...) asparagine" evidence="3">
    <location>
        <position position="1017"/>
    </location>
</feature>
<feature type="glycosylation site" description="N-linked (GlcNAc...) asparagine" evidence="3">
    <location>
        <position position="1371"/>
    </location>
</feature>
<accession>A0A2U8U2K9</accession>
<reference key="1">
    <citation type="journal article" date="2018" name="Nat. Commun.">
        <title>Three previously unrecognised classes of biosynthetic enzymes revealed during the production of xenovulene A.</title>
        <authorList>
            <person name="Schor R."/>
            <person name="Schotte C."/>
            <person name="Wibberg D."/>
            <person name="Kalinowski J."/>
            <person name="Cox R.J."/>
        </authorList>
    </citation>
    <scope>NUCLEOTIDE SEQUENCE [GENOMIC DNA]</scope>
    <scope>INDUCTION</scope>
    <scope>FUNCTION</scope>
</reference>
<reference key="2">
    <citation type="journal article" date="1997" name="J. Pharmacol. Exp. Ther.">
        <title>Regulation of neuronal and recombinant GABA(A) receptor ion channels by xenovulene A, a natural product isolated from Acremonium strictum.</title>
        <authorList>
            <person name="Thomas P."/>
            <person name="Sundaram H."/>
            <person name="Krishek B.J."/>
            <person name="Chazot P."/>
            <person name="Xie X."/>
            <person name="Bevan P."/>
            <person name="Brocchini S.J."/>
            <person name="Latham C.J."/>
            <person name="Charlton P."/>
            <person name="Moore M."/>
            <person name="Lewis S.J."/>
            <person name="Thornton D.M."/>
            <person name="Stephenson F.A."/>
            <person name="Smart T.G."/>
        </authorList>
    </citation>
    <scope>BIOTECHNOLOGY</scope>
</reference>
<reference key="3">
    <citation type="journal article" date="2007" name="Chem. Commun. (Camb.)">
        <title>Characterisation of 3-methylorcinaldehyde synthase (MOS) in Acremonium strictum: first observation of a reductive release mechanism during polyketide biosynthesis.</title>
        <authorList>
            <person name="Bailey A.M."/>
            <person name="Cox R.J."/>
            <person name="Harley K."/>
            <person name="Lazarus C.M."/>
            <person name="Simpson T.J."/>
            <person name="Skellam E."/>
        </authorList>
    </citation>
    <scope>FUNCTION</scope>
</reference>
<reference key="4">
    <citation type="journal article" date="2010" name="Chem. Commun. (Camb.)">
        <title>Catalytic role of the C-terminal domains of a fungal non-reducing polyketide synthase.</title>
        <authorList>
            <person name="Fisch K.M."/>
            <person name="Skellam E."/>
            <person name="Ivison D."/>
            <person name="Cox R.J."/>
            <person name="Bailey A.M."/>
            <person name="Lazarus C.M."/>
            <person name="Simpson T.J."/>
        </authorList>
    </citation>
    <scope>FUNCTION</scope>
</reference>
<name>ASL7_SARSH</name>
<keyword id="KW-0067">ATP-binding</keyword>
<keyword id="KW-1003">Cell membrane</keyword>
<keyword id="KW-0325">Glycoprotein</keyword>
<keyword id="KW-0472">Membrane</keyword>
<keyword id="KW-0547">Nucleotide-binding</keyword>
<keyword id="KW-0677">Repeat</keyword>
<keyword id="KW-0812">Transmembrane</keyword>
<keyword id="KW-1133">Transmembrane helix</keyword>
<keyword id="KW-0813">Transport</keyword>
<sequence length="1432" mass="161123">MFDTTKLQSSTQDGSTSSVTGEPIFGANDPNSELNPSSSHFNVRAWASNYAKVTLEGGSQFRRMGVCFQNLNAFGFITPADYQKDVANIWLALPGMLIRNRKRVNILHQFDGIIRPGEMCVVLGPPSSGCSTFLKTLSGDRDGFFIGEDSYFNYEGISDKELHTAHRGDAIYTAETDVHFPKLTVSQTLEFAAQARCPREIPQGIPRQQFCKQLKDVVMGMYGISHTADTKVGNDYIRGVSGGERKRVTIAEATLSNAPLQCWDNCTRGLDSANAIGFCKTLRLQSEFFGQSCAVSMYQAPQSAYDLFDKATVLYQGHQIYFGPADEAKAYFERLGFECPSRQTTPDFLTSMTFPEERITRAGFNPPRTPEEFAAAWRSSPEYKALQTDISEYKTKHPIDGPNAGVYRELKKSYQARGQRIKSPYTLTYMQQVQMCMRRAWNRLVSDPGPTIVVTMGNFVLALIMSSLFFNMQPDTDSFYGREVVLFMAVMFNAFASVLEVMTLYAQRPIVEKQARYAFYHPSAEAYSSVLMDLPIKVLACVSFNLVFYFMTNLNRTPGNFFFYLLASFFIVLSMSGIFRFIKIPSAAFSRTVQQAMIPASILMVFLITFAGFMVPINYMLPWCRWINYLNPVAYGFESLMINEYAGREFRCSNYIPFDGTPGDPNVACNVVGAVAGETFVSGDAHISEAYSYDAAHKWRNIGIVIAMTIFNYTMCFITSEYVSAKKSKGEILVFRRGFVPKNTHVNKITDDLEARSLPVTKIVESPEGSKEKVGGELQSGSTSIFHWRNVCYDIKIKGKPRRILDNVDGWVKPGTMTALMGVSGAGKTTLLDCLADRRTGIGIITGEMLVDGKIRDESFQRKTGYAQQQDLHLETATVRESLVFSALLRRPHHIPKAEKLAYVEEVIDLLEMGPYADAVVGVLGEGLNVEQRKRLTIAVELAAKPPLLLFVDEPTSGLDSQTSWAVVNLLEKLSKAGQSILCTLHQPSAMLFQRFDRLLLLADGGKTVYFGDIGENSSTLVEYFERKAKHPCPPNANPAEWMLEAIGAAPGTTSEVDWQHVWRTSPEFDRVQEELSRLREHGSQSNSHDSEKSETKAVTYHGEFAVPLWTQFVVVIERVFQQSWRTPAYIYSRFALCGVVSLFIGLVFLNSPLSVRGLQNQMFAVFQLFAIVGQLVSQQMPQFIIQRSLYEVRERPAKTYSWKVFMVSQILSDIPYYALASVMMWALWYFPIGLYKNAEVAGQETERGALMWLLFLAWLMWVSTFGHFCISFSETAEAGANAANFMYVLVNFFCGALITPNQMPRFWIFLYRASPLSYLVSSMLSAGIANVEVTCAANEYTIIDPPMGQTCYEYLRNEINTIGGYLLDNNATENCKFCKLKYSNVFLSEIEIEYGTRWRNFGIIWVYVIFNISAAITLYWVARMPKGHRKV</sequence>
<organism>
    <name type="scientific">Sarocladium schorii</name>
    <name type="common">Acremonium strictum (strain IMI 501407)</name>
    <dbReference type="NCBI Taxonomy" id="2203296"/>
    <lineage>
        <taxon>Eukaryota</taxon>
        <taxon>Fungi</taxon>
        <taxon>Dikarya</taxon>
        <taxon>Ascomycota</taxon>
        <taxon>Pezizomycotina</taxon>
        <taxon>Sordariomycetes</taxon>
        <taxon>Hypocreomycetidae</taxon>
        <taxon>Hypocreales</taxon>
        <taxon>Sarocladiaceae</taxon>
        <taxon>Sarocladium</taxon>
    </lineage>
</organism>
<protein>
    <recommendedName>
        <fullName evidence="7">ABC transporter asL7</fullName>
    </recommendedName>
    <alternativeName>
        <fullName evidence="7">Xenovulene A biosynthesis cluster protein L7</fullName>
    </alternativeName>
</protein>
<evidence type="ECO:0000255" key="1"/>
<evidence type="ECO:0000255" key="2">
    <source>
        <dbReference type="PROSITE-ProRule" id="PRU00434"/>
    </source>
</evidence>
<evidence type="ECO:0000255" key="3">
    <source>
        <dbReference type="PROSITE-ProRule" id="PRU00498"/>
    </source>
</evidence>
<evidence type="ECO:0000256" key="4">
    <source>
        <dbReference type="SAM" id="MobiDB-lite"/>
    </source>
</evidence>
<evidence type="ECO:0000269" key="5">
    <source>
    </source>
</evidence>
<evidence type="ECO:0000269" key="6">
    <source>
    </source>
</evidence>
<evidence type="ECO:0000303" key="7">
    <source>
    </source>
</evidence>
<evidence type="ECO:0000305" key="8"/>
<proteinExistence type="evidence at protein level"/>
<dbReference type="EMBL" id="MG736817">
    <property type="protein sequence ID" value="AWM95783.1"/>
    <property type="molecule type" value="Genomic_DNA"/>
</dbReference>
<dbReference type="SMR" id="A0A2U8U2K9"/>
<dbReference type="GlyCosmos" id="A0A2U8U2K9">
    <property type="glycosylation" value="3 sites, No reported glycans"/>
</dbReference>
<dbReference type="GO" id="GO:0005886">
    <property type="term" value="C:plasma membrane"/>
    <property type="evidence" value="ECO:0007669"/>
    <property type="project" value="UniProtKB-SubCell"/>
</dbReference>
<dbReference type="GO" id="GO:0140359">
    <property type="term" value="F:ABC-type transporter activity"/>
    <property type="evidence" value="ECO:0007669"/>
    <property type="project" value="InterPro"/>
</dbReference>
<dbReference type="GO" id="GO:0005524">
    <property type="term" value="F:ATP binding"/>
    <property type="evidence" value="ECO:0007669"/>
    <property type="project" value="UniProtKB-KW"/>
</dbReference>
<dbReference type="GO" id="GO:0016887">
    <property type="term" value="F:ATP hydrolysis activity"/>
    <property type="evidence" value="ECO:0007669"/>
    <property type="project" value="InterPro"/>
</dbReference>
<dbReference type="CDD" id="cd03233">
    <property type="entry name" value="ABCG_PDR_domain1"/>
    <property type="match status" value="1"/>
</dbReference>
<dbReference type="CDD" id="cd03232">
    <property type="entry name" value="ABCG_PDR_domain2"/>
    <property type="match status" value="1"/>
</dbReference>
<dbReference type="FunFam" id="3.40.50.300:FF:000054">
    <property type="entry name" value="ABC multidrug transporter atrF"/>
    <property type="match status" value="1"/>
</dbReference>
<dbReference type="Gene3D" id="3.40.50.300">
    <property type="entry name" value="P-loop containing nucleotide triphosphate hydrolases"/>
    <property type="match status" value="2"/>
</dbReference>
<dbReference type="InterPro" id="IPR003593">
    <property type="entry name" value="AAA+_ATPase"/>
</dbReference>
<dbReference type="InterPro" id="IPR013525">
    <property type="entry name" value="ABC2_TM"/>
</dbReference>
<dbReference type="InterPro" id="IPR029481">
    <property type="entry name" value="ABC_trans_N"/>
</dbReference>
<dbReference type="InterPro" id="IPR003439">
    <property type="entry name" value="ABC_transporter-like_ATP-bd"/>
</dbReference>
<dbReference type="InterPro" id="IPR017871">
    <property type="entry name" value="ABC_transporter-like_CS"/>
</dbReference>
<dbReference type="InterPro" id="IPR034001">
    <property type="entry name" value="ABCG_PDR_1"/>
</dbReference>
<dbReference type="InterPro" id="IPR034003">
    <property type="entry name" value="ABCG_PDR_2"/>
</dbReference>
<dbReference type="InterPro" id="IPR027417">
    <property type="entry name" value="P-loop_NTPase"/>
</dbReference>
<dbReference type="InterPro" id="IPR010929">
    <property type="entry name" value="PDR_CDR_ABC"/>
</dbReference>
<dbReference type="PANTHER" id="PTHR19241">
    <property type="entry name" value="ATP-BINDING CASSETTE TRANSPORTER"/>
    <property type="match status" value="1"/>
</dbReference>
<dbReference type="Pfam" id="PF01061">
    <property type="entry name" value="ABC2_membrane"/>
    <property type="match status" value="2"/>
</dbReference>
<dbReference type="Pfam" id="PF00005">
    <property type="entry name" value="ABC_tran"/>
    <property type="match status" value="2"/>
</dbReference>
<dbReference type="Pfam" id="PF14510">
    <property type="entry name" value="ABC_trans_N"/>
    <property type="match status" value="1"/>
</dbReference>
<dbReference type="Pfam" id="PF06422">
    <property type="entry name" value="PDR_CDR"/>
    <property type="match status" value="1"/>
</dbReference>
<dbReference type="SMART" id="SM00382">
    <property type="entry name" value="AAA"/>
    <property type="match status" value="1"/>
</dbReference>
<dbReference type="SUPFAM" id="SSF52540">
    <property type="entry name" value="P-loop containing nucleoside triphosphate hydrolases"/>
    <property type="match status" value="2"/>
</dbReference>
<dbReference type="PROSITE" id="PS00211">
    <property type="entry name" value="ABC_TRANSPORTER_1"/>
    <property type="match status" value="1"/>
</dbReference>
<dbReference type="PROSITE" id="PS50893">
    <property type="entry name" value="ABC_TRANSPORTER_2"/>
    <property type="match status" value="2"/>
</dbReference>